<proteinExistence type="inferred from homology"/>
<organism>
    <name type="scientific">Streptococcus pyogenes serotype M28 (strain MGAS6180)</name>
    <dbReference type="NCBI Taxonomy" id="319701"/>
    <lineage>
        <taxon>Bacteria</taxon>
        <taxon>Bacillati</taxon>
        <taxon>Bacillota</taxon>
        <taxon>Bacilli</taxon>
        <taxon>Lactobacillales</taxon>
        <taxon>Streptococcaceae</taxon>
        <taxon>Streptococcus</taxon>
    </lineage>
</organism>
<keyword id="KW-0066">ATP synthesis</keyword>
<keyword id="KW-0067">ATP-binding</keyword>
<keyword id="KW-1003">Cell membrane</keyword>
<keyword id="KW-0139">CF(1)</keyword>
<keyword id="KW-0375">Hydrogen ion transport</keyword>
<keyword id="KW-0406">Ion transport</keyword>
<keyword id="KW-0472">Membrane</keyword>
<keyword id="KW-0547">Nucleotide-binding</keyword>
<keyword id="KW-1278">Translocase</keyword>
<keyword id="KW-0813">Transport</keyword>
<name>ATPA_STRPM</name>
<comment type="function">
    <text evidence="1">Produces ATP from ADP in the presence of a proton gradient across the membrane. The alpha chain is a regulatory subunit.</text>
</comment>
<comment type="catalytic activity">
    <reaction evidence="1">
        <text>ATP + H2O + 4 H(+)(in) = ADP + phosphate + 5 H(+)(out)</text>
        <dbReference type="Rhea" id="RHEA:57720"/>
        <dbReference type="ChEBI" id="CHEBI:15377"/>
        <dbReference type="ChEBI" id="CHEBI:15378"/>
        <dbReference type="ChEBI" id="CHEBI:30616"/>
        <dbReference type="ChEBI" id="CHEBI:43474"/>
        <dbReference type="ChEBI" id="CHEBI:456216"/>
        <dbReference type="EC" id="7.1.2.2"/>
    </reaction>
</comment>
<comment type="subunit">
    <text evidence="1">F-type ATPases have 2 components, CF(1) - the catalytic core - and CF(0) - the membrane proton channel. CF(1) has five subunits: alpha(3), beta(3), gamma(1), delta(1), epsilon(1). CF(0) has three main subunits: a(1), b(2) and c(9-12). The alpha and beta chains form an alternating ring which encloses part of the gamma chain. CF(1) is attached to CF(0) by a central stalk formed by the gamma and epsilon chains, while a peripheral stalk is formed by the delta and b chains.</text>
</comment>
<comment type="subcellular location">
    <subcellularLocation>
        <location evidence="1">Cell membrane</location>
        <topology evidence="1">Peripheral membrane protein</topology>
    </subcellularLocation>
</comment>
<comment type="similarity">
    <text evidence="1">Belongs to the ATPase alpha/beta chains family.</text>
</comment>
<feature type="chain" id="PRO_0000238368" description="ATP synthase subunit alpha">
    <location>
        <begin position="1"/>
        <end position="502"/>
    </location>
</feature>
<feature type="binding site" evidence="1">
    <location>
        <begin position="169"/>
        <end position="176"/>
    </location>
    <ligand>
        <name>ATP</name>
        <dbReference type="ChEBI" id="CHEBI:30616"/>
    </ligand>
</feature>
<feature type="site" description="Required for activity" evidence="1">
    <location>
        <position position="362"/>
    </location>
</feature>
<sequence>MAINAQEISALIKKQIENFQPNFDVTETGIVTYIGDGIARARGLDNAMSGELLEFENGAYGMAQNLESNDVGIIILGDFSAIREGDVVKRTGKIMEVPVGEALIGRVVNPLGQPVDGLGDIETTGFRPVETPAPGVMQRKSVSEPLQTGLKAIDALVPIGRGQRELIIGDRQTGKTSVAIDAILNQKGQDMICIYVAIGQKESTVRTQVETLRRYGALDYTIVVTASASQPSPLLFIAPYAGVAMAEEFMYQGKHVLIVYDDLSKQAVAYRELSLLLRRPPGREAYPGDVFYLHSRLLERSAKVSDDLGGGSITALPFIETQAGDISAYIATNVISITDGQIFLQENLFNSGIRPAIDAGSSVSRVGGSAQIKAMKKVAGTLRLDLASYRELEAFTQFGSDLDAATQAKLNRGRRTVEILKQPLHKPLPVEKQVVILYALTHGFLDDVPVDDILAFEEALYDYFDVHYNDLFETIRTTKDLPEEAALDAAIKAFKEHSNFKS</sequence>
<protein>
    <recommendedName>
        <fullName evidence="1">ATP synthase subunit alpha</fullName>
        <ecNumber evidence="1">7.1.2.2</ecNumber>
    </recommendedName>
    <alternativeName>
        <fullName evidence="1">ATP synthase F1 sector subunit alpha</fullName>
    </alternativeName>
    <alternativeName>
        <fullName evidence="1">F-ATPase subunit alpha</fullName>
    </alternativeName>
</protein>
<evidence type="ECO:0000255" key="1">
    <source>
        <dbReference type="HAMAP-Rule" id="MF_01346"/>
    </source>
</evidence>
<reference key="1">
    <citation type="journal article" date="2005" name="J. Infect. Dis.">
        <title>Genome sequence of a serotype M28 strain of group A Streptococcus: potential new insights into puerperal sepsis and bacterial disease specificity.</title>
        <authorList>
            <person name="Green N.M."/>
            <person name="Zhang S."/>
            <person name="Porcella S.F."/>
            <person name="Nagiec M.J."/>
            <person name="Barbian K.D."/>
            <person name="Beres S.B."/>
            <person name="Lefebvre R.B."/>
            <person name="Musser J.M."/>
        </authorList>
    </citation>
    <scope>NUCLEOTIDE SEQUENCE [LARGE SCALE GENOMIC DNA]</scope>
    <source>
        <strain>MGAS6180</strain>
    </source>
</reference>
<accession>Q48UD5</accession>
<dbReference type="EC" id="7.1.2.2" evidence="1"/>
<dbReference type="EMBL" id="CP000056">
    <property type="protein sequence ID" value="AAX71671.1"/>
    <property type="molecule type" value="Genomic_DNA"/>
</dbReference>
<dbReference type="RefSeq" id="WP_002985238.1">
    <property type="nucleotide sequence ID" value="NC_007296.2"/>
</dbReference>
<dbReference type="SMR" id="Q48UD5"/>
<dbReference type="KEGG" id="spb:M28_Spy0557"/>
<dbReference type="HOGENOM" id="CLU_010091_2_1_9"/>
<dbReference type="GO" id="GO:0005886">
    <property type="term" value="C:plasma membrane"/>
    <property type="evidence" value="ECO:0007669"/>
    <property type="project" value="UniProtKB-SubCell"/>
</dbReference>
<dbReference type="GO" id="GO:0045259">
    <property type="term" value="C:proton-transporting ATP synthase complex"/>
    <property type="evidence" value="ECO:0007669"/>
    <property type="project" value="UniProtKB-KW"/>
</dbReference>
<dbReference type="GO" id="GO:0043531">
    <property type="term" value="F:ADP binding"/>
    <property type="evidence" value="ECO:0007669"/>
    <property type="project" value="TreeGrafter"/>
</dbReference>
<dbReference type="GO" id="GO:0005524">
    <property type="term" value="F:ATP binding"/>
    <property type="evidence" value="ECO:0007669"/>
    <property type="project" value="UniProtKB-UniRule"/>
</dbReference>
<dbReference type="GO" id="GO:0046933">
    <property type="term" value="F:proton-transporting ATP synthase activity, rotational mechanism"/>
    <property type="evidence" value="ECO:0007669"/>
    <property type="project" value="UniProtKB-UniRule"/>
</dbReference>
<dbReference type="CDD" id="cd18113">
    <property type="entry name" value="ATP-synt_F1_alpha_C"/>
    <property type="match status" value="1"/>
</dbReference>
<dbReference type="CDD" id="cd18116">
    <property type="entry name" value="ATP-synt_F1_alpha_N"/>
    <property type="match status" value="1"/>
</dbReference>
<dbReference type="CDD" id="cd01132">
    <property type="entry name" value="F1-ATPase_alpha_CD"/>
    <property type="match status" value="1"/>
</dbReference>
<dbReference type="FunFam" id="1.20.150.20:FF:000001">
    <property type="entry name" value="ATP synthase subunit alpha"/>
    <property type="match status" value="1"/>
</dbReference>
<dbReference type="FunFam" id="2.40.30.20:FF:000001">
    <property type="entry name" value="ATP synthase subunit alpha"/>
    <property type="match status" value="1"/>
</dbReference>
<dbReference type="FunFam" id="3.40.50.300:FF:000002">
    <property type="entry name" value="ATP synthase subunit alpha"/>
    <property type="match status" value="1"/>
</dbReference>
<dbReference type="Gene3D" id="2.40.30.20">
    <property type="match status" value="1"/>
</dbReference>
<dbReference type="Gene3D" id="1.20.150.20">
    <property type="entry name" value="ATP synthase alpha/beta chain, C-terminal domain"/>
    <property type="match status" value="1"/>
</dbReference>
<dbReference type="Gene3D" id="3.40.50.300">
    <property type="entry name" value="P-loop containing nucleotide triphosphate hydrolases"/>
    <property type="match status" value="1"/>
</dbReference>
<dbReference type="HAMAP" id="MF_01346">
    <property type="entry name" value="ATP_synth_alpha_bact"/>
    <property type="match status" value="1"/>
</dbReference>
<dbReference type="InterPro" id="IPR023366">
    <property type="entry name" value="ATP_synth_asu-like_sf"/>
</dbReference>
<dbReference type="InterPro" id="IPR000793">
    <property type="entry name" value="ATP_synth_asu_C"/>
</dbReference>
<dbReference type="InterPro" id="IPR038376">
    <property type="entry name" value="ATP_synth_asu_C_sf"/>
</dbReference>
<dbReference type="InterPro" id="IPR033732">
    <property type="entry name" value="ATP_synth_F1_a_nt-bd_dom"/>
</dbReference>
<dbReference type="InterPro" id="IPR005294">
    <property type="entry name" value="ATP_synth_F1_asu"/>
</dbReference>
<dbReference type="InterPro" id="IPR004100">
    <property type="entry name" value="ATPase_F1/V1/A1_a/bsu_N"/>
</dbReference>
<dbReference type="InterPro" id="IPR036121">
    <property type="entry name" value="ATPase_F1/V1/A1_a/bsu_N_sf"/>
</dbReference>
<dbReference type="InterPro" id="IPR000194">
    <property type="entry name" value="ATPase_F1/V1/A1_a/bsu_nucl-bd"/>
</dbReference>
<dbReference type="InterPro" id="IPR027417">
    <property type="entry name" value="P-loop_NTPase"/>
</dbReference>
<dbReference type="NCBIfam" id="TIGR00962">
    <property type="entry name" value="atpA"/>
    <property type="match status" value="1"/>
</dbReference>
<dbReference type="NCBIfam" id="NF009884">
    <property type="entry name" value="PRK13343.1"/>
    <property type="match status" value="1"/>
</dbReference>
<dbReference type="PANTHER" id="PTHR48082">
    <property type="entry name" value="ATP SYNTHASE SUBUNIT ALPHA, MITOCHONDRIAL"/>
    <property type="match status" value="1"/>
</dbReference>
<dbReference type="PANTHER" id="PTHR48082:SF2">
    <property type="entry name" value="ATP SYNTHASE SUBUNIT ALPHA, MITOCHONDRIAL"/>
    <property type="match status" value="1"/>
</dbReference>
<dbReference type="Pfam" id="PF00006">
    <property type="entry name" value="ATP-synt_ab"/>
    <property type="match status" value="1"/>
</dbReference>
<dbReference type="Pfam" id="PF00306">
    <property type="entry name" value="ATP-synt_ab_C"/>
    <property type="match status" value="1"/>
</dbReference>
<dbReference type="Pfam" id="PF02874">
    <property type="entry name" value="ATP-synt_ab_N"/>
    <property type="match status" value="1"/>
</dbReference>
<dbReference type="PIRSF" id="PIRSF039088">
    <property type="entry name" value="F_ATPase_subunit_alpha"/>
    <property type="match status" value="1"/>
</dbReference>
<dbReference type="SUPFAM" id="SSF47917">
    <property type="entry name" value="C-terminal domain of alpha and beta subunits of F1 ATP synthase"/>
    <property type="match status" value="1"/>
</dbReference>
<dbReference type="SUPFAM" id="SSF50615">
    <property type="entry name" value="N-terminal domain of alpha and beta subunits of F1 ATP synthase"/>
    <property type="match status" value="1"/>
</dbReference>
<dbReference type="SUPFAM" id="SSF52540">
    <property type="entry name" value="P-loop containing nucleoside triphosphate hydrolases"/>
    <property type="match status" value="1"/>
</dbReference>
<gene>
    <name evidence="1" type="primary">atpA</name>
    <name type="ordered locus">M28_Spy0557</name>
</gene>